<protein>
    <recommendedName>
        <fullName>Protein UL11</fullName>
    </recommendedName>
</protein>
<keyword id="KW-0325">Glycoprotein</keyword>
<keyword id="KW-1032">Host cell membrane</keyword>
<keyword id="KW-1038">Host endoplasmic reticulum</keyword>
<keyword id="KW-1043">Host membrane</keyword>
<keyword id="KW-0472">Membrane</keyword>
<keyword id="KW-1185">Reference proteome</keyword>
<keyword id="KW-0732">Signal</keyword>
<keyword id="KW-0812">Transmembrane</keyword>
<keyword id="KW-1133">Transmembrane helix</keyword>
<reference key="1">
    <citation type="journal article" date="2004" name="J. Gen. Virol.">
        <title>Genetic content of wild-type human cytomegalovirus.</title>
        <authorList>
            <person name="Dolan A."/>
            <person name="Cunningham C."/>
            <person name="Hector R.D."/>
            <person name="Hassan-Walker A.F."/>
            <person name="Lee L."/>
            <person name="Addison C."/>
            <person name="Dargan D.J."/>
            <person name="McGeoch D.J."/>
            <person name="Gatherer D."/>
            <person name="Emery V.C."/>
            <person name="Griffiths P.D."/>
            <person name="Sinzger C."/>
            <person name="McSharry B.P."/>
            <person name="Wilkinson G.W.G."/>
            <person name="Davison A.J."/>
        </authorList>
    </citation>
    <scope>NUCLEOTIDE SEQUENCE [LARGE SCALE GENOMIC DNA]</scope>
</reference>
<reference key="2">
    <citation type="journal article" date="2011" name="PLoS Pathog.">
        <title>The human cytomegalovirus UL11 protein interacts with the receptor tyrosine phosphatase CD45, resulting in functional paralysis of T cells.</title>
        <authorList>
            <person name="Gabaev I."/>
            <person name="Steinbrueck L."/>
            <person name="Pokoyski C."/>
            <person name="Pich A."/>
            <person name="Stanton R.J."/>
            <person name="Schwinzer R."/>
            <person name="Schulz T.F."/>
            <person name="Jacobs R."/>
            <person name="Messerle M."/>
            <person name="Kay-Fedorov P.C."/>
        </authorList>
    </citation>
    <scope>FUNCTION</scope>
    <scope>INTERACTION WITH HOST PTPRC</scope>
    <scope>SUBCELLULAR LOCATION</scope>
</reference>
<reference key="3">
    <citation type="journal article" date="2014" name="J. Virol.">
        <title>Expression of the human cytomegalovirus UL11 glycoprotein in viral infection and evaluation of its effect on virus-specific CD8 T cells.</title>
        <authorList>
            <person name="Gabaev I."/>
            <person name="Elbasani E."/>
            <person name="Ameres S."/>
            <person name="Steinbrueck L."/>
            <person name="Stanton R."/>
            <person name="Doering M."/>
            <person name="Lenac Rovis T."/>
            <person name="Kalinke U."/>
            <person name="Jonjic S."/>
            <person name="Moosmann A."/>
            <person name="Messerle M."/>
        </authorList>
    </citation>
    <scope>FUNCTION</scope>
    <scope>SUBCELLULAR LOCATION</scope>
    <scope>GLYCOSYLATION</scope>
</reference>
<gene>
    <name type="primary">UL11</name>
</gene>
<organism>
    <name type="scientific">Human cytomegalovirus (strain Merlin)</name>
    <name type="common">HHV-5</name>
    <name type="synonym">Human herpesvirus 5</name>
    <dbReference type="NCBI Taxonomy" id="295027"/>
    <lineage>
        <taxon>Viruses</taxon>
        <taxon>Duplodnaviria</taxon>
        <taxon>Heunggongvirae</taxon>
        <taxon>Peploviricota</taxon>
        <taxon>Herviviricetes</taxon>
        <taxon>Herpesvirales</taxon>
        <taxon>Orthoherpesviridae</taxon>
        <taxon>Betaherpesvirinae</taxon>
        <taxon>Cytomegalovirus</taxon>
        <taxon>Cytomegalovirus humanbeta5</taxon>
        <taxon>Human cytomegalovirus</taxon>
    </lineage>
</organism>
<evidence type="ECO:0000255" key="1"/>
<evidence type="ECO:0000256" key="2">
    <source>
        <dbReference type="SAM" id="MobiDB-lite"/>
    </source>
</evidence>
<evidence type="ECO:0000269" key="3">
    <source>
    </source>
</evidence>
<evidence type="ECO:0000269" key="4">
    <source>
    </source>
</evidence>
<evidence type="ECO:0000305" key="5"/>
<comment type="function">
    <text evidence="3 4">Plays a role in the modulation of host immune response by modulating T-cell function. Interacts with host PTPRC/CD45 and thereby reduces host TCR signaling and T-cell proliferation.</text>
</comment>
<comment type="subunit">
    <text evidence="3">Interacts with host PTPRC; this interaction affects T-cell signaling.</text>
</comment>
<comment type="subcellular location">
    <subcellularLocation>
        <location evidence="3">Host cell membrane</location>
        <topology evidence="5">Single-pass type I membrane protein</topology>
    </subcellularLocation>
    <subcellularLocation>
        <location evidence="4">Host endoplasmic reticulum</location>
    </subcellularLocation>
    <text>Localizes to the host cell membrane when highly glycosylated while less glycosylated forms are found on the endoplasmic reticulum.</text>
</comment>
<comment type="PTM">
    <text evidence="4">Glycosylated.</text>
</comment>
<comment type="similarity">
    <text evidence="5">Belongs to the RL11 family.</text>
</comment>
<sequence>MLFRYITFHREKVLYLTAACIFGVYISLHDACIPVVGKIGTNVTLNAVDVLPPRDQVRWSYGPGGQGYMLCIFTGTSTTTFNNTRFNFSCLSNYSLLLINVTTQYSTTYRTMTSLDHWLHQRHNHGSRWTLDTCYNLTVNENGTFPTTTTKKPTTTTRTTTTTTQRTTTTRTTTTAKKTTISTTHHKHPSPKKSTTPNSHVEHHVGFEATAAETPLQPSPQHQHLATHALWVLAVVIVIIIIIIFYFRIPQKLWLLWQHDKHGIVLIPQTDL</sequence>
<feature type="signal peptide" evidence="1">
    <location>
        <begin position="1"/>
        <end position="31"/>
    </location>
</feature>
<feature type="chain" id="PRO_0000418313" description="Protein UL11">
    <location>
        <begin position="32"/>
        <end position="272"/>
    </location>
</feature>
<feature type="topological domain" description="Extracellular" evidence="1">
    <location>
        <begin position="32"/>
        <end position="224"/>
    </location>
</feature>
<feature type="transmembrane region" description="Helical" evidence="1">
    <location>
        <begin position="225"/>
        <end position="245"/>
    </location>
</feature>
<feature type="topological domain" description="Cytoplasmic" evidence="1">
    <location>
        <begin position="246"/>
        <end position="272"/>
    </location>
</feature>
<feature type="region of interest" description="Disordered" evidence="2">
    <location>
        <begin position="142"/>
        <end position="200"/>
    </location>
</feature>
<feature type="compositionally biased region" description="Low complexity" evidence="2">
    <location>
        <begin position="147"/>
        <end position="183"/>
    </location>
</feature>
<feature type="glycosylation site" description="N-linked (GlcNAc...) asparagine; by host" evidence="1">
    <location>
        <position position="42"/>
    </location>
</feature>
<feature type="glycosylation site" description="N-linked (GlcNAc...) asparagine; by host" evidence="1">
    <location>
        <position position="93"/>
    </location>
</feature>
<feature type="glycosylation site" description="N-linked (GlcNAc...) asparagine; by host" evidence="1">
    <location>
        <position position="100"/>
    </location>
</feature>
<feature type="glycosylation site" description="N-linked (GlcNAc...) asparagine; by host" evidence="1">
    <location>
        <position position="142"/>
    </location>
</feature>
<accession>Q6SWB9</accession>
<accession>D2K3I1</accession>
<proteinExistence type="evidence at protein level"/>
<organismHost>
    <name type="scientific">Homo sapiens</name>
    <name type="common">Human</name>
    <dbReference type="NCBI Taxonomy" id="9606"/>
</organismHost>
<dbReference type="EMBL" id="AY446894">
    <property type="protein sequence ID" value="AAR31577.1"/>
    <property type="molecule type" value="Genomic_DNA"/>
</dbReference>
<dbReference type="RefSeq" id="YP_081471.1">
    <property type="nucleotide sequence ID" value="NC_006273.2"/>
</dbReference>
<dbReference type="GlyCosmos" id="Q6SWB9">
    <property type="glycosylation" value="4 sites, No reported glycans"/>
</dbReference>
<dbReference type="DNASU" id="3077560"/>
<dbReference type="GeneID" id="3077560"/>
<dbReference type="KEGG" id="vg:3077560"/>
<dbReference type="Reactome" id="R-HSA-9609690">
    <property type="pathway name" value="HCMV Early Events"/>
</dbReference>
<dbReference type="Proteomes" id="UP000000938">
    <property type="component" value="Segment"/>
</dbReference>
<dbReference type="GO" id="GO:0044165">
    <property type="term" value="C:host cell endoplasmic reticulum"/>
    <property type="evidence" value="ECO:0007669"/>
    <property type="project" value="UniProtKB-SubCell"/>
</dbReference>
<dbReference type="GO" id="GO:0020002">
    <property type="term" value="C:host cell plasma membrane"/>
    <property type="evidence" value="ECO:0007669"/>
    <property type="project" value="UniProtKB-SubCell"/>
</dbReference>
<dbReference type="GO" id="GO:0016020">
    <property type="term" value="C:membrane"/>
    <property type="evidence" value="ECO:0007669"/>
    <property type="project" value="UniProtKB-KW"/>
</dbReference>
<dbReference type="Gene3D" id="2.60.40.10">
    <property type="entry name" value="Immunoglobulins"/>
    <property type="match status" value="1"/>
</dbReference>
<dbReference type="InterPro" id="IPR036179">
    <property type="entry name" value="Ig-like_dom_sf"/>
</dbReference>
<dbReference type="InterPro" id="IPR013783">
    <property type="entry name" value="Ig-like_fold"/>
</dbReference>
<dbReference type="SUPFAM" id="SSF48726">
    <property type="entry name" value="Immunoglobulin"/>
    <property type="match status" value="1"/>
</dbReference>
<name>UL11P_HCMVM</name>